<sequence>MRKHLNDLYKQIEKFPKTSGCYKMYSKDNKILYIGKAKNLRSRVKNYFSKRTSHKTKILMNNVTNIEIITTNSEYEALLLECNLIKKYKPTYNIKLKDDKGYPMIRITCEKYPRIFKTRKIINDGSEYFGPYVNVKNLDLVLDLINKTFKTKKCKKKSKNPCLYFHMGQCLGVCYREDLEDEYRKEIEQIKHILNGNISKLLNDIEIKMKEVIMKENFEAAIKLKETKKSLIEISQTQIITKIDKLSEDYLYIHKTNSLNTIVILKYKDGKLTEKDIHFDESIYEEDELIEKFITQYYTSPNMIVPDKIHIFKKIDTSNITKLINELKNIKTEIIYKETQDNIKIIEMATSNAKLALITYNHEKNKAIENLKTILEMKKLPKTIEGFDIAHINGYKTVASLVTFKMGKPFKDGYRVYKINSLSNGEIDDCKAIKEVISRRYSKLINEQLKLPDLILIDGGKGQLNAAYSILKGLRIEEKIAICALAKKEEIIFLPNKNQGIKLQKRNSALQVLQNVRDEAHRRANNFNNKLHNNIKLNYTKIKGIGEQKAKKILKVLGTYKDILLLNEDEIATKMKINITMANKIKKFAEEQNLNNKQNNHI</sequence>
<comment type="function">
    <text evidence="1">The UvrABC repair system catalyzes the recognition and processing of DNA lesions. UvrC both incises the 5' and 3' sides of the lesion. The N-terminal half is responsible for the 3' incision and the C-terminal half is responsible for the 5' incision.</text>
</comment>
<comment type="subunit">
    <text evidence="1">Interacts with UvrB in an incision complex.</text>
</comment>
<comment type="subcellular location">
    <subcellularLocation>
        <location evidence="1">Cytoplasm</location>
    </subcellularLocation>
</comment>
<comment type="similarity">
    <text evidence="1">Belongs to the UvrC family.</text>
</comment>
<gene>
    <name evidence="1" type="primary">uvrC</name>
    <name type="ordered locus">BDU_455</name>
</gene>
<protein>
    <recommendedName>
        <fullName evidence="1">UvrABC system protein C</fullName>
        <shortName evidence="1">Protein UvrC</shortName>
    </recommendedName>
    <alternativeName>
        <fullName evidence="1">Excinuclease ABC subunit C</fullName>
    </alternativeName>
</protein>
<reference key="1">
    <citation type="journal article" date="2008" name="PLoS Genet.">
        <title>The genome of Borrelia recurrentis, the agent of deadly louse-borne relapsing fever, is a degraded subset of tick-borne Borrelia duttonii.</title>
        <authorList>
            <person name="Lescot M."/>
            <person name="Audic S."/>
            <person name="Robert C."/>
            <person name="Nguyen T.T."/>
            <person name="Blanc G."/>
            <person name="Cutler S.J."/>
            <person name="Wincker P."/>
            <person name="Couloux A."/>
            <person name="Claverie J.-M."/>
            <person name="Raoult D."/>
            <person name="Drancourt M."/>
        </authorList>
    </citation>
    <scope>NUCLEOTIDE SEQUENCE [LARGE SCALE GENOMIC DNA]</scope>
    <source>
        <strain>Ly</strain>
    </source>
</reference>
<organism>
    <name type="scientific">Borrelia duttonii (strain Ly)</name>
    <dbReference type="NCBI Taxonomy" id="412419"/>
    <lineage>
        <taxon>Bacteria</taxon>
        <taxon>Pseudomonadati</taxon>
        <taxon>Spirochaetota</taxon>
        <taxon>Spirochaetia</taxon>
        <taxon>Spirochaetales</taxon>
        <taxon>Borreliaceae</taxon>
        <taxon>Borrelia</taxon>
    </lineage>
</organism>
<feature type="chain" id="PRO_1000099460" description="UvrABC system protein C">
    <location>
        <begin position="1"/>
        <end position="602"/>
    </location>
</feature>
<feature type="domain" description="GIY-YIG" evidence="1">
    <location>
        <begin position="17"/>
        <end position="94"/>
    </location>
</feature>
<feature type="domain" description="UVR" evidence="1">
    <location>
        <begin position="199"/>
        <end position="234"/>
    </location>
</feature>
<keyword id="KW-0963">Cytoplasm</keyword>
<keyword id="KW-0227">DNA damage</keyword>
<keyword id="KW-0228">DNA excision</keyword>
<keyword id="KW-0234">DNA repair</keyword>
<keyword id="KW-0267">Excision nuclease</keyword>
<keyword id="KW-0742">SOS response</keyword>
<name>UVRC_BORDL</name>
<dbReference type="EMBL" id="CP000976">
    <property type="protein sequence ID" value="ACH93400.1"/>
    <property type="molecule type" value="Genomic_DNA"/>
</dbReference>
<dbReference type="RefSeq" id="WP_012538211.1">
    <property type="nucleotide sequence ID" value="NC_011229.1"/>
</dbReference>
<dbReference type="SMR" id="B5RM14"/>
<dbReference type="STRING" id="412419.BDU_455"/>
<dbReference type="KEGG" id="bdu:BDU_455"/>
<dbReference type="eggNOG" id="COG0322">
    <property type="taxonomic scope" value="Bacteria"/>
</dbReference>
<dbReference type="HOGENOM" id="CLU_014841_3_2_12"/>
<dbReference type="OrthoDB" id="9804933at2"/>
<dbReference type="Proteomes" id="UP000000611">
    <property type="component" value="Chromosome"/>
</dbReference>
<dbReference type="GO" id="GO:0005737">
    <property type="term" value="C:cytoplasm"/>
    <property type="evidence" value="ECO:0007669"/>
    <property type="project" value="UniProtKB-SubCell"/>
</dbReference>
<dbReference type="GO" id="GO:0009380">
    <property type="term" value="C:excinuclease repair complex"/>
    <property type="evidence" value="ECO:0007669"/>
    <property type="project" value="InterPro"/>
</dbReference>
<dbReference type="GO" id="GO:0003677">
    <property type="term" value="F:DNA binding"/>
    <property type="evidence" value="ECO:0007669"/>
    <property type="project" value="UniProtKB-UniRule"/>
</dbReference>
<dbReference type="GO" id="GO:0009381">
    <property type="term" value="F:excinuclease ABC activity"/>
    <property type="evidence" value="ECO:0007669"/>
    <property type="project" value="UniProtKB-UniRule"/>
</dbReference>
<dbReference type="GO" id="GO:0006289">
    <property type="term" value="P:nucleotide-excision repair"/>
    <property type="evidence" value="ECO:0007669"/>
    <property type="project" value="UniProtKB-UniRule"/>
</dbReference>
<dbReference type="GO" id="GO:0009432">
    <property type="term" value="P:SOS response"/>
    <property type="evidence" value="ECO:0007669"/>
    <property type="project" value="UniProtKB-UniRule"/>
</dbReference>
<dbReference type="CDD" id="cd10434">
    <property type="entry name" value="GIY-YIG_UvrC_Cho"/>
    <property type="match status" value="1"/>
</dbReference>
<dbReference type="FunFam" id="3.40.1440.10:FF:000001">
    <property type="entry name" value="UvrABC system protein C"/>
    <property type="match status" value="1"/>
</dbReference>
<dbReference type="Gene3D" id="1.10.150.20">
    <property type="entry name" value="5' to 3' exonuclease, C-terminal subdomain"/>
    <property type="match status" value="1"/>
</dbReference>
<dbReference type="Gene3D" id="3.40.1440.10">
    <property type="entry name" value="GIY-YIG endonuclease"/>
    <property type="match status" value="1"/>
</dbReference>
<dbReference type="Gene3D" id="3.30.420.340">
    <property type="entry name" value="UvrC, RNAse H endonuclease domain"/>
    <property type="match status" value="1"/>
</dbReference>
<dbReference type="HAMAP" id="MF_00203">
    <property type="entry name" value="UvrC"/>
    <property type="match status" value="1"/>
</dbReference>
<dbReference type="InterPro" id="IPR000305">
    <property type="entry name" value="GIY-YIG_endonuc"/>
</dbReference>
<dbReference type="InterPro" id="IPR035901">
    <property type="entry name" value="GIY-YIG_endonuc_sf"/>
</dbReference>
<dbReference type="InterPro" id="IPR047296">
    <property type="entry name" value="GIY-YIG_UvrC_Cho"/>
</dbReference>
<dbReference type="InterPro" id="IPR010994">
    <property type="entry name" value="RuvA_2-like"/>
</dbReference>
<dbReference type="InterPro" id="IPR050066">
    <property type="entry name" value="UvrABC_protein_C"/>
</dbReference>
<dbReference type="InterPro" id="IPR004791">
    <property type="entry name" value="UvrC"/>
</dbReference>
<dbReference type="InterPro" id="IPR001162">
    <property type="entry name" value="UvrC_RNase_H_dom"/>
</dbReference>
<dbReference type="InterPro" id="IPR038476">
    <property type="entry name" value="UvrC_RNase_H_dom_sf"/>
</dbReference>
<dbReference type="NCBIfam" id="NF011264">
    <property type="entry name" value="PRK14670.1"/>
    <property type="match status" value="1"/>
</dbReference>
<dbReference type="NCBIfam" id="TIGR00194">
    <property type="entry name" value="uvrC"/>
    <property type="match status" value="1"/>
</dbReference>
<dbReference type="PANTHER" id="PTHR30562:SF1">
    <property type="entry name" value="UVRABC SYSTEM PROTEIN C"/>
    <property type="match status" value="1"/>
</dbReference>
<dbReference type="PANTHER" id="PTHR30562">
    <property type="entry name" value="UVRC/OXIDOREDUCTASE"/>
    <property type="match status" value="1"/>
</dbReference>
<dbReference type="Pfam" id="PF01541">
    <property type="entry name" value="GIY-YIG"/>
    <property type="match status" value="1"/>
</dbReference>
<dbReference type="Pfam" id="PF22920">
    <property type="entry name" value="UvrC_RNaseH"/>
    <property type="match status" value="1"/>
</dbReference>
<dbReference type="Pfam" id="PF08459">
    <property type="entry name" value="UvrC_RNaseH_dom"/>
    <property type="match status" value="1"/>
</dbReference>
<dbReference type="SMART" id="SM00465">
    <property type="entry name" value="GIYc"/>
    <property type="match status" value="1"/>
</dbReference>
<dbReference type="SUPFAM" id="SSF82771">
    <property type="entry name" value="GIY-YIG endonuclease"/>
    <property type="match status" value="1"/>
</dbReference>
<dbReference type="SUPFAM" id="SSF47781">
    <property type="entry name" value="RuvA domain 2-like"/>
    <property type="match status" value="1"/>
</dbReference>
<dbReference type="PROSITE" id="PS50164">
    <property type="entry name" value="GIY_YIG"/>
    <property type="match status" value="1"/>
</dbReference>
<dbReference type="PROSITE" id="PS50165">
    <property type="entry name" value="UVRC"/>
    <property type="match status" value="1"/>
</dbReference>
<accession>B5RM14</accession>
<proteinExistence type="inferred from homology"/>
<evidence type="ECO:0000255" key="1">
    <source>
        <dbReference type="HAMAP-Rule" id="MF_00203"/>
    </source>
</evidence>